<sequence length="426" mass="48680">MSILGIVVEYNPFHNGHLFHLKKAKELINPDLTIAVMSGNFVQRGEPAIMDNYSRAEIALKAGIDIVVQLPVVYSVQDAGGFALGSVWTLSLLGVTDIVFGSETGNMKLLDVLSDILIEEPTVYVKLLKQHLKTGLSFPNARKAALKDYLKLHLSDFAESIQEIERSNNILGLEYLRAIKQIRSDITPHSIVRTGADYNDPYFKGRFSSATAIRKLIITGQWEKVKQAVPDYSYAIIKRECALKKCPVHLEKMGRFILGLLRRLDREDFKNYYGFTEGLDARFVRCSRQCGEISEFLECVKAKRFTFTRLKRLLMNVILKLSPKLIEQSNKQGPQYIRVLGFNENGRSHLSRIKKKLKVPLLTTPSTWKRVMYKAISGDFEIDQDLFQLQMKRDIMAADIYSLFFDDVKVIKASNEMKRRIIYIRG</sequence>
<evidence type="ECO:0000255" key="1">
    <source>
        <dbReference type="HAMAP-Rule" id="MF_01539"/>
    </source>
</evidence>
<comment type="function">
    <text evidence="1">Catalyzes the formation of N(4)-acetylcytidine (ac(4)C) at the wobble position of elongator tRNA(Met), using acetate and ATP as substrates. First activates an acetate ion to form acetyladenylate (Ac-AMP) and then transfers the acetyl group to tRNA to form ac(4)C34.</text>
</comment>
<comment type="catalytic activity">
    <reaction evidence="1">
        <text>cytidine(34) in elongator tRNA(Met) + acetate + ATP = N(4)-acetylcytidine(34) in elongator tRNA(Met) + AMP + diphosphate</text>
        <dbReference type="Rhea" id="RHEA:58144"/>
        <dbReference type="Rhea" id="RHEA-COMP:10693"/>
        <dbReference type="Rhea" id="RHEA-COMP:10694"/>
        <dbReference type="ChEBI" id="CHEBI:30089"/>
        <dbReference type="ChEBI" id="CHEBI:30616"/>
        <dbReference type="ChEBI" id="CHEBI:33019"/>
        <dbReference type="ChEBI" id="CHEBI:74900"/>
        <dbReference type="ChEBI" id="CHEBI:82748"/>
        <dbReference type="ChEBI" id="CHEBI:456215"/>
    </reaction>
</comment>
<comment type="subcellular location">
    <subcellularLocation>
        <location evidence="1">Cytoplasm</location>
    </subcellularLocation>
</comment>
<comment type="similarity">
    <text evidence="1">Belongs to the TmcAL family.</text>
</comment>
<accession>C5CEQ4</accession>
<gene>
    <name evidence="1" type="primary">tmcAL</name>
    <name type="ordered locus">Kole_1544</name>
</gene>
<keyword id="KW-0067">ATP-binding</keyword>
<keyword id="KW-0963">Cytoplasm</keyword>
<keyword id="KW-0436">Ligase</keyword>
<keyword id="KW-0547">Nucleotide-binding</keyword>
<keyword id="KW-1185">Reference proteome</keyword>
<keyword id="KW-0694">RNA-binding</keyword>
<keyword id="KW-0819">tRNA processing</keyword>
<keyword id="KW-0820">tRNA-binding</keyword>
<proteinExistence type="inferred from homology"/>
<protein>
    <recommendedName>
        <fullName evidence="1">tRNA(Met) cytidine acetate ligase</fullName>
        <ecNumber evidence="1">6.3.4.-</ecNumber>
    </recommendedName>
</protein>
<feature type="chain" id="PRO_1000215428" description="tRNA(Met) cytidine acetate ligase">
    <location>
        <begin position="1"/>
        <end position="426"/>
    </location>
</feature>
<feature type="binding site" evidence="1">
    <location>
        <begin position="7"/>
        <end position="20"/>
    </location>
    <ligand>
        <name>ATP</name>
        <dbReference type="ChEBI" id="CHEBI:30616"/>
    </ligand>
</feature>
<feature type="binding site" evidence="1">
    <location>
        <position position="101"/>
    </location>
    <ligand>
        <name>ATP</name>
        <dbReference type="ChEBI" id="CHEBI:30616"/>
    </ligand>
</feature>
<feature type="binding site" evidence="1">
    <location>
        <position position="168"/>
    </location>
    <ligand>
        <name>ATP</name>
        <dbReference type="ChEBI" id="CHEBI:30616"/>
    </ligand>
</feature>
<feature type="binding site" evidence="1">
    <location>
        <position position="193"/>
    </location>
    <ligand>
        <name>ATP</name>
        <dbReference type="ChEBI" id="CHEBI:30616"/>
    </ligand>
</feature>
<organism>
    <name type="scientific">Kosmotoga olearia (strain ATCC BAA-1733 / DSM 21960 / TBF 19.5.1)</name>
    <dbReference type="NCBI Taxonomy" id="521045"/>
    <lineage>
        <taxon>Bacteria</taxon>
        <taxon>Thermotogati</taxon>
        <taxon>Thermotogota</taxon>
        <taxon>Thermotogae</taxon>
        <taxon>Kosmotogales</taxon>
        <taxon>Kosmotogaceae</taxon>
        <taxon>Kosmotoga</taxon>
    </lineage>
</organism>
<name>TMCAL_KOSOT</name>
<dbReference type="EC" id="6.3.4.-" evidence="1"/>
<dbReference type="EMBL" id="CP001634">
    <property type="protein sequence ID" value="ACR80234.1"/>
    <property type="molecule type" value="Genomic_DNA"/>
</dbReference>
<dbReference type="RefSeq" id="WP_015868879.1">
    <property type="nucleotide sequence ID" value="NC_012785.1"/>
</dbReference>
<dbReference type="SMR" id="C5CEQ4"/>
<dbReference type="STRING" id="521045.Kole_1544"/>
<dbReference type="KEGG" id="kol:Kole_1544"/>
<dbReference type="eggNOG" id="COG1323">
    <property type="taxonomic scope" value="Bacteria"/>
</dbReference>
<dbReference type="HOGENOM" id="CLU_038915_0_2_0"/>
<dbReference type="OrthoDB" id="9769796at2"/>
<dbReference type="Proteomes" id="UP000002382">
    <property type="component" value="Chromosome"/>
</dbReference>
<dbReference type="GO" id="GO:0005737">
    <property type="term" value="C:cytoplasm"/>
    <property type="evidence" value="ECO:0007669"/>
    <property type="project" value="UniProtKB-SubCell"/>
</dbReference>
<dbReference type="GO" id="GO:0005524">
    <property type="term" value="F:ATP binding"/>
    <property type="evidence" value="ECO:0007669"/>
    <property type="project" value="UniProtKB-KW"/>
</dbReference>
<dbReference type="GO" id="GO:0016879">
    <property type="term" value="F:ligase activity, forming carbon-nitrogen bonds"/>
    <property type="evidence" value="ECO:0007669"/>
    <property type="project" value="UniProtKB-UniRule"/>
</dbReference>
<dbReference type="GO" id="GO:0000049">
    <property type="term" value="F:tRNA binding"/>
    <property type="evidence" value="ECO:0007669"/>
    <property type="project" value="UniProtKB-KW"/>
</dbReference>
<dbReference type="GO" id="GO:0006400">
    <property type="term" value="P:tRNA modification"/>
    <property type="evidence" value="ECO:0007669"/>
    <property type="project" value="UniProtKB-UniRule"/>
</dbReference>
<dbReference type="Gene3D" id="3.40.50.620">
    <property type="entry name" value="HUPs"/>
    <property type="match status" value="1"/>
</dbReference>
<dbReference type="HAMAP" id="MF_01539">
    <property type="entry name" value="TmcAL"/>
    <property type="match status" value="1"/>
</dbReference>
<dbReference type="InterPro" id="IPR014729">
    <property type="entry name" value="Rossmann-like_a/b/a_fold"/>
</dbReference>
<dbReference type="InterPro" id="IPR008513">
    <property type="entry name" value="tRNA(Met)_cyd_acetate_ligase"/>
</dbReference>
<dbReference type="NCBIfam" id="NF010191">
    <property type="entry name" value="PRK13670.1"/>
    <property type="match status" value="1"/>
</dbReference>
<dbReference type="PANTHER" id="PTHR37825">
    <property type="entry name" value="TRNA(MET) CYTIDINE ACETATE LIGASE"/>
    <property type="match status" value="1"/>
</dbReference>
<dbReference type="PANTHER" id="PTHR37825:SF1">
    <property type="entry name" value="TRNA(MET) CYTIDINE ACETATE LIGASE"/>
    <property type="match status" value="1"/>
</dbReference>
<dbReference type="Pfam" id="PF05636">
    <property type="entry name" value="HIGH_NTase1"/>
    <property type="match status" value="1"/>
</dbReference>
<dbReference type="SUPFAM" id="SSF52374">
    <property type="entry name" value="Nucleotidylyl transferase"/>
    <property type="match status" value="1"/>
</dbReference>
<reference key="1">
    <citation type="submission" date="2009-06" db="EMBL/GenBank/DDBJ databases">
        <title>Complete sequence of Thermotogales bacterium TBF 19.5.1.</title>
        <authorList>
            <consortium name="US DOE Joint Genome Institute"/>
            <person name="Lucas S."/>
            <person name="Copeland A."/>
            <person name="Lapidus A."/>
            <person name="Glavina del Rio T."/>
            <person name="Tice H."/>
            <person name="Bruce D."/>
            <person name="Goodwin L."/>
            <person name="Pitluck S."/>
            <person name="Chertkov O."/>
            <person name="Brettin T."/>
            <person name="Detter J.C."/>
            <person name="Han C."/>
            <person name="Schmutz J."/>
            <person name="Larimer F."/>
            <person name="Land M."/>
            <person name="Hauser L."/>
            <person name="Kyrpides N."/>
            <person name="Ovchinnikova G."/>
            <person name="Noll K."/>
        </authorList>
    </citation>
    <scope>NUCLEOTIDE SEQUENCE [LARGE SCALE GENOMIC DNA]</scope>
    <source>
        <strain>ATCC BAA-1733 / DSM 21960 / TBF 19.5.1</strain>
    </source>
</reference>